<accession>Q1B321</accession>
<gene>
    <name evidence="2" type="primary">otsA</name>
    <name type="ordered locus">Mmcs_4609</name>
</gene>
<organism>
    <name type="scientific">Mycobacterium sp. (strain MCS)</name>
    <dbReference type="NCBI Taxonomy" id="164756"/>
    <lineage>
        <taxon>Bacteria</taxon>
        <taxon>Bacillati</taxon>
        <taxon>Actinomycetota</taxon>
        <taxon>Actinomycetes</taxon>
        <taxon>Mycobacteriales</taxon>
        <taxon>Mycobacteriaceae</taxon>
        <taxon>Mycobacterium</taxon>
    </lineage>
</organism>
<evidence type="ECO:0000250" key="1">
    <source>
        <dbReference type="UniProtKB" id="P31677"/>
    </source>
</evidence>
<evidence type="ECO:0000250" key="2">
    <source>
        <dbReference type="UniProtKB" id="P9WN11"/>
    </source>
</evidence>
<dbReference type="EC" id="2.4.1.15" evidence="2"/>
<dbReference type="EC" id="2.4.1.347" evidence="2"/>
<dbReference type="EMBL" id="CP000384">
    <property type="protein sequence ID" value="ABG10713.1"/>
    <property type="molecule type" value="Genomic_DNA"/>
</dbReference>
<dbReference type="SMR" id="Q1B321"/>
<dbReference type="CAZy" id="GT20">
    <property type="family name" value="Glycosyltransferase Family 20"/>
</dbReference>
<dbReference type="KEGG" id="mmc:Mmcs_4609"/>
<dbReference type="HOGENOM" id="CLU_002351_7_1_11"/>
<dbReference type="BioCyc" id="MSP164756:G1G6O-4711-MONOMER"/>
<dbReference type="UniPathway" id="UPA00299"/>
<dbReference type="GO" id="GO:0005829">
    <property type="term" value="C:cytosol"/>
    <property type="evidence" value="ECO:0007669"/>
    <property type="project" value="TreeGrafter"/>
</dbReference>
<dbReference type="GO" id="GO:0047260">
    <property type="term" value="F:alpha,alpha-trehalose-phosphate synthase (GDP-forming) activity"/>
    <property type="evidence" value="ECO:0007669"/>
    <property type="project" value="RHEA"/>
</dbReference>
<dbReference type="GO" id="GO:0003825">
    <property type="term" value="F:alpha,alpha-trehalose-phosphate synthase (UDP-forming) activity"/>
    <property type="evidence" value="ECO:0007669"/>
    <property type="project" value="UniProtKB-EC"/>
</dbReference>
<dbReference type="GO" id="GO:0004805">
    <property type="term" value="F:trehalose-phosphatase activity"/>
    <property type="evidence" value="ECO:0007669"/>
    <property type="project" value="TreeGrafter"/>
</dbReference>
<dbReference type="GO" id="GO:0005992">
    <property type="term" value="P:trehalose biosynthetic process"/>
    <property type="evidence" value="ECO:0007669"/>
    <property type="project" value="UniProtKB-UniPathway"/>
</dbReference>
<dbReference type="CDD" id="cd03788">
    <property type="entry name" value="GT20_TPS"/>
    <property type="match status" value="1"/>
</dbReference>
<dbReference type="Gene3D" id="3.40.50.2000">
    <property type="entry name" value="Glycogen Phosphorylase B"/>
    <property type="match status" value="2"/>
</dbReference>
<dbReference type="InterPro" id="IPR001830">
    <property type="entry name" value="Glyco_trans_20"/>
</dbReference>
<dbReference type="PANTHER" id="PTHR10788:SF106">
    <property type="entry name" value="BCDNA.GH08860"/>
    <property type="match status" value="1"/>
</dbReference>
<dbReference type="PANTHER" id="PTHR10788">
    <property type="entry name" value="TREHALOSE-6-PHOSPHATE SYNTHASE"/>
    <property type="match status" value="1"/>
</dbReference>
<dbReference type="Pfam" id="PF00982">
    <property type="entry name" value="Glyco_transf_20"/>
    <property type="match status" value="1"/>
</dbReference>
<dbReference type="SUPFAM" id="SSF53756">
    <property type="entry name" value="UDP-Glycosyltransferase/glycogen phosphorylase"/>
    <property type="match status" value="1"/>
</dbReference>
<feature type="chain" id="PRO_0000348913" description="Trehalose-6-phosphate synthase">
    <location>
        <begin position="1"/>
        <end position="489"/>
    </location>
</feature>
<feature type="binding site" evidence="1">
    <location>
        <position position="22"/>
    </location>
    <ligand>
        <name>D-glucose 6-phosphate</name>
        <dbReference type="ChEBI" id="CHEBI:61548"/>
    </ligand>
</feature>
<feature type="binding site" evidence="1">
    <location>
        <begin position="42"/>
        <end position="43"/>
    </location>
    <ligand>
        <name>UDP-alpha-D-glucose</name>
        <dbReference type="ChEBI" id="CHEBI:58885"/>
    </ligand>
</feature>
<feature type="binding site" evidence="1">
    <location>
        <position position="94"/>
    </location>
    <ligand>
        <name>D-glucose 6-phosphate</name>
        <dbReference type="ChEBI" id="CHEBI:61548"/>
    </ligand>
</feature>
<feature type="binding site" evidence="1">
    <location>
        <position position="148"/>
    </location>
    <ligand>
        <name>D-glucose 6-phosphate</name>
        <dbReference type="ChEBI" id="CHEBI:61548"/>
    </ligand>
</feature>
<feature type="binding site" evidence="1">
    <location>
        <position position="290"/>
    </location>
    <ligand>
        <name>UDP-alpha-D-glucose</name>
        <dbReference type="ChEBI" id="CHEBI:58885"/>
    </ligand>
</feature>
<feature type="binding site" evidence="1">
    <location>
        <position position="295"/>
    </location>
    <ligand>
        <name>UDP-alpha-D-glucose</name>
        <dbReference type="ChEBI" id="CHEBI:58885"/>
    </ligand>
</feature>
<feature type="binding site" evidence="1">
    <location>
        <position position="328"/>
    </location>
    <ligand>
        <name>D-glucose 6-phosphate</name>
        <dbReference type="ChEBI" id="CHEBI:61548"/>
    </ligand>
</feature>
<feature type="binding site" evidence="1">
    <location>
        <begin position="393"/>
        <end position="397"/>
    </location>
    <ligand>
        <name>UDP-alpha-D-glucose</name>
        <dbReference type="ChEBI" id="CHEBI:58885"/>
    </ligand>
</feature>
<feature type="site" description="Involved in alpha anomer selectivity" evidence="1">
    <location>
        <position position="103"/>
    </location>
</feature>
<feature type="site" description="Involved in alpha anomer selectivity" evidence="1">
    <location>
        <position position="173"/>
    </location>
</feature>
<name>OTSA_MYCSS</name>
<proteinExistence type="inferred from homology"/>
<sequence length="489" mass="54726">MASEGDPGVGSGDSDFVVVANRLPIDMERLPDGSTSFKRSPGGLVTALEPLLRKRHGAWIGWAGIPDSAEDPIEDDGLQLYPVSLSADDVADYYEGFSNATLWPLYHDLIVKPIYHRKWWDRYVEVNRRFAEATARAAAEGATVWVQDYQLQLVPKMLRMLRPDLTIGFFLHIPFPPVELFMQMPWRTEIIEGLLGADLVGFHLPGGAQNFLYLARRLTGANTSRATVGVRSRFGEVQVGFRTVKVGAFPISIDSDELDGKARNRAVRQRAREIRNELGNPRKILLGVDRLDYTKGINVRLEALSELLEDGRVDSHDTVFVQLATPSRERVQSYIEMREDIERQVGHINGEFGDVGHPIVHYLHRPIPRDELIAFFVAADVMLVTPLRDGMNLVAKEYVACRSDLGGALVLSEFTGAAAELRQAYLANPHHLEGVKDAIEAALNQDPEEGRRRMRALRRQVLAHDVDRWARAFLDALADTRAGAKPVRD</sequence>
<protein>
    <recommendedName>
        <fullName evidence="2">Trehalose-6-phosphate synthase</fullName>
        <shortName evidence="2">TPS</shortName>
        <ecNumber evidence="2">2.4.1.15</ecNumber>
        <ecNumber evidence="2">2.4.1.347</ecNumber>
    </recommendedName>
    <alternativeName>
        <fullName evidence="2">Alpha,alpha-trehalose-phosphate synthase [UDP-forming]</fullName>
    </alternativeName>
    <alternativeName>
        <fullName evidence="1">Osmoregulatory trehalose synthesis protein A</fullName>
        <shortName evidence="1">OtsA</shortName>
    </alternativeName>
</protein>
<comment type="function">
    <text evidence="2">Probably involved in the osmoprotection via the biosynthesis of trehalose and in the production of glycogen and alpha-glucan via the TreS-Pep2 branch involved in the biosynthesis of maltose-1-phosphate (M1P). Catalyzes the transfer of glucose from UDP-glucose (UDP-Glc) to D-glucose 6-phosphate (Glc-6-P) to form trehalose-6-phosphate. Probably also able to use ADP-Glc, CDP-Glc, GDP-Glc and TDP-Glc as glucosyl donors.</text>
</comment>
<comment type="catalytic activity">
    <reaction evidence="2">
        <text>ADP-alpha-D-glucose + D-glucose 6-phosphate = alpha,alpha-trehalose 6-phosphate + ADP + H(+)</text>
        <dbReference type="Rhea" id="RHEA:53880"/>
        <dbReference type="ChEBI" id="CHEBI:15378"/>
        <dbReference type="ChEBI" id="CHEBI:57498"/>
        <dbReference type="ChEBI" id="CHEBI:58429"/>
        <dbReference type="ChEBI" id="CHEBI:61548"/>
        <dbReference type="ChEBI" id="CHEBI:456216"/>
        <dbReference type="EC" id="2.4.1.347"/>
    </reaction>
</comment>
<comment type="catalytic activity">
    <reaction evidence="2">
        <text>CDP-alpha-D-glucose + D-glucose 6-phosphate = alpha,alpha-trehalose 6-phosphate + CDP + H(+)</text>
        <dbReference type="Rhea" id="RHEA:53884"/>
        <dbReference type="ChEBI" id="CHEBI:15378"/>
        <dbReference type="ChEBI" id="CHEBI:58069"/>
        <dbReference type="ChEBI" id="CHEBI:58429"/>
        <dbReference type="ChEBI" id="CHEBI:61548"/>
        <dbReference type="ChEBI" id="CHEBI:137927"/>
    </reaction>
</comment>
<comment type="catalytic activity">
    <reaction evidence="2">
        <text>GDP-alpha-D-glucose + D-glucose 6-phosphate = alpha,alpha-trehalose 6-phosphate + GDP + H(+)</text>
        <dbReference type="Rhea" id="RHEA:14605"/>
        <dbReference type="ChEBI" id="CHEBI:15378"/>
        <dbReference type="ChEBI" id="CHEBI:58189"/>
        <dbReference type="ChEBI" id="CHEBI:58429"/>
        <dbReference type="ChEBI" id="CHEBI:61548"/>
        <dbReference type="ChEBI" id="CHEBI:62230"/>
    </reaction>
</comment>
<comment type="catalytic activity">
    <reaction evidence="2">
        <text>TDP-alpha-D-glucose + D-glucose 6-phosphate = 5-methyl-UDP + alpha,alpha-trehalose 6-phosphate + H(+)</text>
        <dbReference type="Rhea" id="RHEA:53888"/>
        <dbReference type="ChEBI" id="CHEBI:15378"/>
        <dbReference type="ChEBI" id="CHEBI:58429"/>
        <dbReference type="ChEBI" id="CHEBI:61417"/>
        <dbReference type="ChEBI" id="CHEBI:61548"/>
        <dbReference type="ChEBI" id="CHEBI:137931"/>
    </reaction>
</comment>
<comment type="catalytic activity">
    <reaction evidence="2">
        <text>D-glucose 6-phosphate + UDP-alpha-D-glucose = alpha,alpha-trehalose 6-phosphate + UDP + H(+)</text>
        <dbReference type="Rhea" id="RHEA:18889"/>
        <dbReference type="ChEBI" id="CHEBI:15378"/>
        <dbReference type="ChEBI" id="CHEBI:58223"/>
        <dbReference type="ChEBI" id="CHEBI:58429"/>
        <dbReference type="ChEBI" id="CHEBI:58885"/>
        <dbReference type="ChEBI" id="CHEBI:61548"/>
        <dbReference type="EC" id="2.4.1.15"/>
    </reaction>
</comment>
<comment type="pathway">
    <text evidence="2">Glycan biosynthesis; trehalose biosynthesis.</text>
</comment>
<comment type="subunit">
    <text evidence="2">Homotetramer.</text>
</comment>
<comment type="similarity">
    <text evidence="2">Belongs to the glycosyltransferase 20 family.</text>
</comment>
<keyword id="KW-0328">Glycosyltransferase</keyword>
<keyword id="KW-0808">Transferase</keyword>
<reference key="1">
    <citation type="submission" date="2006-06" db="EMBL/GenBank/DDBJ databases">
        <title>Complete sequence of chromosome of Mycobacterium sp. MCS.</title>
        <authorList>
            <consortium name="US DOE Joint Genome Institute"/>
            <person name="Copeland A."/>
            <person name="Lucas S."/>
            <person name="Lapidus A."/>
            <person name="Barry K."/>
            <person name="Detter J.C."/>
            <person name="Glavina del Rio T."/>
            <person name="Hammon N."/>
            <person name="Israni S."/>
            <person name="Dalin E."/>
            <person name="Tice H."/>
            <person name="Pitluck S."/>
            <person name="Martinez M."/>
            <person name="Schmutz J."/>
            <person name="Larimer F."/>
            <person name="Land M."/>
            <person name="Hauser L."/>
            <person name="Kyrpides N."/>
            <person name="Kim E."/>
            <person name="Miller C.D."/>
            <person name="Hughes J.E."/>
            <person name="Anderson A.J."/>
            <person name="Sims R.C."/>
            <person name="Richardson P."/>
        </authorList>
    </citation>
    <scope>NUCLEOTIDE SEQUENCE [LARGE SCALE GENOMIC DNA]</scope>
    <source>
        <strain>MCS</strain>
    </source>
</reference>